<protein>
    <recommendedName>
        <fullName evidence="1">Probable transaldolase</fullName>
        <ecNumber evidence="1">2.2.1.2</ecNumber>
    </recommendedName>
</protein>
<gene>
    <name evidence="1" type="primary">tal</name>
    <name type="ordered locus">GSU2977</name>
</gene>
<organism>
    <name type="scientific">Geobacter sulfurreducens (strain ATCC 51573 / DSM 12127 / PCA)</name>
    <dbReference type="NCBI Taxonomy" id="243231"/>
    <lineage>
        <taxon>Bacteria</taxon>
        <taxon>Pseudomonadati</taxon>
        <taxon>Thermodesulfobacteriota</taxon>
        <taxon>Desulfuromonadia</taxon>
        <taxon>Geobacterales</taxon>
        <taxon>Geobacteraceae</taxon>
        <taxon>Geobacter</taxon>
    </lineage>
</organism>
<evidence type="ECO:0000255" key="1">
    <source>
        <dbReference type="HAMAP-Rule" id="MF_00494"/>
    </source>
</evidence>
<dbReference type="EC" id="2.2.1.2" evidence="1"/>
<dbReference type="EMBL" id="AE017180">
    <property type="protein sequence ID" value="AAR36369.1"/>
    <property type="molecule type" value="Genomic_DNA"/>
</dbReference>
<dbReference type="RefSeq" id="NP_954019.1">
    <property type="nucleotide sequence ID" value="NC_002939.5"/>
</dbReference>
<dbReference type="SMR" id="Q748M4"/>
<dbReference type="FunCoup" id="Q748M4">
    <property type="interactions" value="250"/>
</dbReference>
<dbReference type="STRING" id="243231.GSU2977"/>
<dbReference type="EnsemblBacteria" id="AAR36369">
    <property type="protein sequence ID" value="AAR36369"/>
    <property type="gene ID" value="GSU2977"/>
</dbReference>
<dbReference type="KEGG" id="gsu:GSU2977"/>
<dbReference type="PATRIC" id="fig|243231.5.peg.3003"/>
<dbReference type="eggNOG" id="COG0176">
    <property type="taxonomic scope" value="Bacteria"/>
</dbReference>
<dbReference type="HOGENOM" id="CLU_079764_0_0_7"/>
<dbReference type="InParanoid" id="Q748M4"/>
<dbReference type="OrthoDB" id="9807051at2"/>
<dbReference type="UniPathway" id="UPA00115">
    <property type="reaction ID" value="UER00414"/>
</dbReference>
<dbReference type="Proteomes" id="UP000000577">
    <property type="component" value="Chromosome"/>
</dbReference>
<dbReference type="GO" id="GO:0005737">
    <property type="term" value="C:cytoplasm"/>
    <property type="evidence" value="ECO:0007669"/>
    <property type="project" value="UniProtKB-SubCell"/>
</dbReference>
<dbReference type="GO" id="GO:0016832">
    <property type="term" value="F:aldehyde-lyase activity"/>
    <property type="evidence" value="ECO:0007669"/>
    <property type="project" value="InterPro"/>
</dbReference>
<dbReference type="GO" id="GO:0004801">
    <property type="term" value="F:transaldolase activity"/>
    <property type="evidence" value="ECO:0007669"/>
    <property type="project" value="UniProtKB-UniRule"/>
</dbReference>
<dbReference type="GO" id="GO:0005975">
    <property type="term" value="P:carbohydrate metabolic process"/>
    <property type="evidence" value="ECO:0007669"/>
    <property type="project" value="InterPro"/>
</dbReference>
<dbReference type="GO" id="GO:0006098">
    <property type="term" value="P:pentose-phosphate shunt"/>
    <property type="evidence" value="ECO:0007669"/>
    <property type="project" value="UniProtKB-UniRule"/>
</dbReference>
<dbReference type="CDD" id="cd00956">
    <property type="entry name" value="Transaldolase_FSA"/>
    <property type="match status" value="1"/>
</dbReference>
<dbReference type="FunFam" id="3.20.20.70:FF:000018">
    <property type="entry name" value="Probable transaldolase"/>
    <property type="match status" value="1"/>
</dbReference>
<dbReference type="Gene3D" id="3.20.20.70">
    <property type="entry name" value="Aldolase class I"/>
    <property type="match status" value="1"/>
</dbReference>
<dbReference type="HAMAP" id="MF_00494">
    <property type="entry name" value="Transaldolase_3b"/>
    <property type="match status" value="1"/>
</dbReference>
<dbReference type="InterPro" id="IPR013785">
    <property type="entry name" value="Aldolase_TIM"/>
</dbReference>
<dbReference type="InterPro" id="IPR001585">
    <property type="entry name" value="TAL/FSA"/>
</dbReference>
<dbReference type="InterPro" id="IPR022999">
    <property type="entry name" value="Transaldolase_3B"/>
</dbReference>
<dbReference type="InterPro" id="IPR004731">
    <property type="entry name" value="Transaldolase_3B/F6P_aldolase"/>
</dbReference>
<dbReference type="InterPro" id="IPR018225">
    <property type="entry name" value="Transaldolase_AS"/>
</dbReference>
<dbReference type="InterPro" id="IPR033919">
    <property type="entry name" value="TSA/FSA_arc/bac"/>
</dbReference>
<dbReference type="NCBIfam" id="TIGR00875">
    <property type="entry name" value="fsa_talC_mipB"/>
    <property type="match status" value="1"/>
</dbReference>
<dbReference type="PANTHER" id="PTHR10683:SF40">
    <property type="entry name" value="FRUCTOSE-6-PHOSPHATE ALDOLASE 1-RELATED"/>
    <property type="match status" value="1"/>
</dbReference>
<dbReference type="PANTHER" id="PTHR10683">
    <property type="entry name" value="TRANSALDOLASE"/>
    <property type="match status" value="1"/>
</dbReference>
<dbReference type="Pfam" id="PF00923">
    <property type="entry name" value="TAL_FSA"/>
    <property type="match status" value="1"/>
</dbReference>
<dbReference type="SUPFAM" id="SSF51569">
    <property type="entry name" value="Aldolase"/>
    <property type="match status" value="1"/>
</dbReference>
<dbReference type="PROSITE" id="PS01054">
    <property type="entry name" value="TRANSALDOLASE_1"/>
    <property type="match status" value="1"/>
</dbReference>
<proteinExistence type="inferred from homology"/>
<keyword id="KW-0963">Cytoplasm</keyword>
<keyword id="KW-0570">Pentose shunt</keyword>
<keyword id="KW-1185">Reference proteome</keyword>
<keyword id="KW-0704">Schiff base</keyword>
<keyword id="KW-0808">Transferase</keyword>
<accession>Q748M4</accession>
<reference key="1">
    <citation type="journal article" date="2003" name="Science">
        <title>Genome of Geobacter sulfurreducens: metal reduction in subsurface environments.</title>
        <authorList>
            <person name="Methe B.A."/>
            <person name="Nelson K.E."/>
            <person name="Eisen J.A."/>
            <person name="Paulsen I.T."/>
            <person name="Nelson W.C."/>
            <person name="Heidelberg J.F."/>
            <person name="Wu D."/>
            <person name="Wu M."/>
            <person name="Ward N.L."/>
            <person name="Beanan M.J."/>
            <person name="Dodson R.J."/>
            <person name="Madupu R."/>
            <person name="Brinkac L.M."/>
            <person name="Daugherty S.C."/>
            <person name="DeBoy R.T."/>
            <person name="Durkin A.S."/>
            <person name="Gwinn M.L."/>
            <person name="Kolonay J.F."/>
            <person name="Sullivan S.A."/>
            <person name="Haft D.H."/>
            <person name="Selengut J."/>
            <person name="Davidsen T.M."/>
            <person name="Zafar N."/>
            <person name="White O."/>
            <person name="Tran B."/>
            <person name="Romero C."/>
            <person name="Forberger H.A."/>
            <person name="Weidman J.F."/>
            <person name="Khouri H.M."/>
            <person name="Feldblyum T.V."/>
            <person name="Utterback T.R."/>
            <person name="Van Aken S.E."/>
            <person name="Lovley D.R."/>
            <person name="Fraser C.M."/>
        </authorList>
    </citation>
    <scope>NUCLEOTIDE SEQUENCE [LARGE SCALE GENOMIC DNA]</scope>
    <source>
        <strain>ATCC 51573 / DSM 12127 / PCA</strain>
    </source>
</reference>
<comment type="function">
    <text evidence="1">Transaldolase is important for the balance of metabolites in the pentose-phosphate pathway.</text>
</comment>
<comment type="catalytic activity">
    <reaction evidence="1">
        <text>D-sedoheptulose 7-phosphate + D-glyceraldehyde 3-phosphate = D-erythrose 4-phosphate + beta-D-fructose 6-phosphate</text>
        <dbReference type="Rhea" id="RHEA:17053"/>
        <dbReference type="ChEBI" id="CHEBI:16897"/>
        <dbReference type="ChEBI" id="CHEBI:57483"/>
        <dbReference type="ChEBI" id="CHEBI:57634"/>
        <dbReference type="ChEBI" id="CHEBI:59776"/>
        <dbReference type="EC" id="2.2.1.2"/>
    </reaction>
</comment>
<comment type="pathway">
    <text evidence="1">Carbohydrate degradation; pentose phosphate pathway; D-glyceraldehyde 3-phosphate and beta-D-fructose 6-phosphate from D-ribose 5-phosphate and D-xylulose 5-phosphate (non-oxidative stage): step 2/3.</text>
</comment>
<comment type="subcellular location">
    <subcellularLocation>
        <location evidence="1">Cytoplasm</location>
    </subcellularLocation>
</comment>
<comment type="similarity">
    <text evidence="1">Belongs to the transaldolase family. Type 3B subfamily.</text>
</comment>
<name>TAL_GEOSL</name>
<feature type="chain" id="PRO_1000060465" description="Probable transaldolase">
    <location>
        <begin position="1"/>
        <end position="214"/>
    </location>
</feature>
<feature type="active site" description="Schiff-base intermediate with substrate" evidence="1">
    <location>
        <position position="83"/>
    </location>
</feature>
<sequence length="214" mass="23173">MKFFIDTADVKEIRQAHDLGLVDGVTTNPSLIAKSGRKFEDVIKEITEIVDGPISAEVVSLEAAGMIREAGELAKIHKNIVIKLPMTPEGLKACAALTREGIKTNVTLIFTPMQALLAAKAGATYVSPFVGRLDDISQDGMGIIDDIKTIFDNYGYQSEIIVASVRNPVHVLNAALIGADIATIPYSVMLQLAKHPLTDSGIERFLKDWESVPK</sequence>